<evidence type="ECO:0000255" key="1"/>
<evidence type="ECO:0000305" key="2"/>
<organism>
    <name type="scientific">Ipomoea batatas</name>
    <name type="common">Sweet potato</name>
    <name type="synonym">Convolvulus batatas</name>
    <dbReference type="NCBI Taxonomy" id="4120"/>
    <lineage>
        <taxon>Eukaryota</taxon>
        <taxon>Viridiplantae</taxon>
        <taxon>Streptophyta</taxon>
        <taxon>Embryophyta</taxon>
        <taxon>Tracheophyta</taxon>
        <taxon>Spermatophyta</taxon>
        <taxon>Magnoliopsida</taxon>
        <taxon>eudicotyledons</taxon>
        <taxon>Gunneridae</taxon>
        <taxon>Pentapetalae</taxon>
        <taxon>asterids</taxon>
        <taxon>lamiids</taxon>
        <taxon>Solanales</taxon>
        <taxon>Convolvulaceae</taxon>
        <taxon>Ipomoeeae</taxon>
        <taxon>Ipomoea</taxon>
    </lineage>
</organism>
<sequence>MKALALLFVLSLYLLPNPAHSKFNPIRLRPAHETASSETPVLDINGDEVRAGENYYIVSAIWGAGGGGLRLVRLDSSSNECASDVIVSRSDFDNGDPITITPADPEATVVMPSTYQTFRFNIATNKLCVNNVNWGIKHDSESGQYFVKAGEFVSDNSNQFKIEVVNDNLNAYKISYCQFGTEKCFNVGRYYDPLTRATRLALSNTPFVFVIKPTDM</sequence>
<keyword id="KW-0732">Signal</keyword>
<keyword id="KW-0758">Storage protein</keyword>
<keyword id="KW-0926">Vacuole</keyword>
<comment type="function">
    <text>Major tuberous root protein.</text>
</comment>
<comment type="subcellular location">
    <subcellularLocation>
        <location>Vacuole</location>
    </subcellularLocation>
</comment>
<comment type="tissue specificity">
    <text>Accumulates specifically in tuberous roots and tubers upon tuberization. Sporamin accounts 60 to 80% of the total soluble protein of the organ.</text>
</comment>
<comment type="similarity">
    <text evidence="2">Belongs to the protease inhibitor I3 (leguminous Kunitz-type inhibitor) family.</text>
</comment>
<reference key="1">
    <citation type="journal article" date="1988" name="Plant Mol. Biol.">
        <title>Genes encoding for the major tuberous root protein of sweet potato: identification of putative regulatory sequence in the 5' upstream region.</title>
        <authorList>
            <person name="Hattori T."/>
            <person name="Nakamura K."/>
        </authorList>
        <dbReference type="AGRICOLA" id="IND92000020"/>
    </citation>
    <scope>NUCLEOTIDE SEQUENCE [GENOMIC DNA]</scope>
    <source>
        <strain>cv. Kokei No. 14</strain>
        <tissue>Tuberous root</tissue>
    </source>
</reference>
<feature type="signal peptide" evidence="1">
    <location>
        <begin position="1"/>
        <end position="21"/>
    </location>
</feature>
<feature type="chain" id="PRO_0000016938" description="Sporamin B">
    <location>
        <begin position="22"/>
        <end position="216"/>
    </location>
</feature>
<name>SPORB_IPOBA</name>
<gene>
    <name type="primary">GSPO-B1</name>
</gene>
<proteinExistence type="evidence at transcript level"/>
<accession>P10965</accession>
<protein>
    <recommendedName>
        <fullName>Sporamin B</fullName>
    </recommendedName>
</protein>
<dbReference type="EMBL" id="X13510">
    <property type="protein sequence ID" value="CAA31863.1"/>
    <property type="molecule type" value="Genomic_DNA"/>
</dbReference>
<dbReference type="PIR" id="S04207">
    <property type="entry name" value="S04207"/>
</dbReference>
<dbReference type="SMR" id="P10965"/>
<dbReference type="MEROPS" id="I03.013"/>
<dbReference type="GO" id="GO:0005773">
    <property type="term" value="C:vacuole"/>
    <property type="evidence" value="ECO:0007669"/>
    <property type="project" value="UniProtKB-SubCell"/>
</dbReference>
<dbReference type="GO" id="GO:0004866">
    <property type="term" value="F:endopeptidase inhibitor activity"/>
    <property type="evidence" value="ECO:0007669"/>
    <property type="project" value="InterPro"/>
</dbReference>
<dbReference type="GO" id="GO:0045735">
    <property type="term" value="F:nutrient reservoir activity"/>
    <property type="evidence" value="ECO:0007669"/>
    <property type="project" value="UniProtKB-KW"/>
</dbReference>
<dbReference type="CDD" id="cd23368">
    <property type="entry name" value="beta-trefoil_STI_SPOR"/>
    <property type="match status" value="1"/>
</dbReference>
<dbReference type="Gene3D" id="2.80.10.50">
    <property type="match status" value="1"/>
</dbReference>
<dbReference type="InterPro" id="IPR011065">
    <property type="entry name" value="Kunitz_inhibitor_STI-like_sf"/>
</dbReference>
<dbReference type="InterPro" id="IPR002160">
    <property type="entry name" value="Prot_inh_Kunz-lg"/>
</dbReference>
<dbReference type="PANTHER" id="PTHR33107:SF28">
    <property type="entry name" value="CYSTEINE PROTEASE INHIBITOR 8-LIKE"/>
    <property type="match status" value="1"/>
</dbReference>
<dbReference type="PANTHER" id="PTHR33107">
    <property type="entry name" value="KUNITZ TRYPSIN INHIBITOR 2"/>
    <property type="match status" value="1"/>
</dbReference>
<dbReference type="Pfam" id="PF00197">
    <property type="entry name" value="Kunitz_legume"/>
    <property type="match status" value="1"/>
</dbReference>
<dbReference type="PRINTS" id="PR00291">
    <property type="entry name" value="KUNITZINHBTR"/>
</dbReference>
<dbReference type="SMART" id="SM00452">
    <property type="entry name" value="STI"/>
    <property type="match status" value="1"/>
</dbReference>
<dbReference type="SUPFAM" id="SSF50386">
    <property type="entry name" value="STI-like"/>
    <property type="match status" value="1"/>
</dbReference>
<dbReference type="PROSITE" id="PS00283">
    <property type="entry name" value="SOYBEAN_KUNITZ"/>
    <property type="match status" value="1"/>
</dbReference>